<dbReference type="EMBL" id="AAFC03120816">
    <property type="status" value="NOT_ANNOTATED_CDS"/>
    <property type="molecule type" value="Genomic_DNA"/>
</dbReference>
<dbReference type="EMBL" id="BC114126">
    <property type="protein sequence ID" value="AAI14127.1"/>
    <property type="molecule type" value="mRNA"/>
</dbReference>
<dbReference type="RefSeq" id="NP_001039602.1">
    <molecule id="Q29RL1-2"/>
    <property type="nucleotide sequence ID" value="NM_001046137.2"/>
</dbReference>
<dbReference type="RefSeq" id="XP_005210949.1">
    <molecule id="Q29RL1-1"/>
    <property type="nucleotide sequence ID" value="XM_005210892.5"/>
</dbReference>
<dbReference type="RefSeq" id="XP_059745626.1">
    <molecule id="Q29RL1-1"/>
    <property type="nucleotide sequence ID" value="XM_059889643.1"/>
</dbReference>
<dbReference type="SMR" id="Q29RL1"/>
<dbReference type="FunCoup" id="Q29RL1">
    <property type="interactions" value="94"/>
</dbReference>
<dbReference type="STRING" id="9913.ENSBTAP00000018677"/>
<dbReference type="PaxDb" id="9913-ENSBTAP00000018677"/>
<dbReference type="Ensembl" id="ENSBTAT00000018677.7">
    <molecule id="Q29RL1-1"/>
    <property type="protein sequence ID" value="ENSBTAP00000018677.5"/>
    <property type="gene ID" value="ENSBTAG00000014054.7"/>
</dbReference>
<dbReference type="Ensembl" id="ENSBTAT00000046847.5">
    <molecule id="Q29RL1-2"/>
    <property type="protein sequence ID" value="ENSBTAP00000044094.3"/>
    <property type="gene ID" value="ENSBTAG00000014054.7"/>
</dbReference>
<dbReference type="GeneID" id="513096"/>
<dbReference type="KEGG" id="bta:513096"/>
<dbReference type="CTD" id="154313"/>
<dbReference type="VEuPathDB" id="HostDB:ENSBTAG00000014054"/>
<dbReference type="eggNOG" id="ENOG502QTGJ">
    <property type="taxonomic scope" value="Eukaryota"/>
</dbReference>
<dbReference type="GeneTree" id="ENSGT00390000016036"/>
<dbReference type="HOGENOM" id="CLU_030061_0_0_1"/>
<dbReference type="InParanoid" id="Q29RL1"/>
<dbReference type="OMA" id="QLMELMC"/>
<dbReference type="OrthoDB" id="10251073at2759"/>
<dbReference type="TreeFam" id="TF323439"/>
<dbReference type="Proteomes" id="UP000009136">
    <property type="component" value="Chromosome 9"/>
</dbReference>
<dbReference type="Bgee" id="ENSBTAG00000014054">
    <property type="expression patterns" value="Expressed in spermatid and 39 other cell types or tissues"/>
</dbReference>
<dbReference type="GO" id="GO:0005930">
    <property type="term" value="C:axoneme"/>
    <property type="evidence" value="ECO:0000250"/>
    <property type="project" value="UniProtKB"/>
</dbReference>
<dbReference type="GO" id="GO:0036064">
    <property type="term" value="C:ciliary basal body"/>
    <property type="evidence" value="ECO:0000250"/>
    <property type="project" value="UniProtKB"/>
</dbReference>
<dbReference type="GO" id="GO:0031514">
    <property type="term" value="C:motile cilium"/>
    <property type="evidence" value="ECO:0000250"/>
    <property type="project" value="UniProtKB"/>
</dbReference>
<dbReference type="GO" id="GO:0001534">
    <property type="term" value="C:radial spoke"/>
    <property type="evidence" value="ECO:0000250"/>
    <property type="project" value="UniProtKB"/>
</dbReference>
<dbReference type="GO" id="GO:0035082">
    <property type="term" value="P:axoneme assembly"/>
    <property type="evidence" value="ECO:0000250"/>
    <property type="project" value="UniProtKB"/>
</dbReference>
<dbReference type="GO" id="GO:0003341">
    <property type="term" value="P:cilium movement"/>
    <property type="evidence" value="ECO:0000250"/>
    <property type="project" value="UniProtKB"/>
</dbReference>
<dbReference type="GO" id="GO:0003356">
    <property type="term" value="P:regulation of cilium beat frequency"/>
    <property type="evidence" value="ECO:0000250"/>
    <property type="project" value="UniProtKB"/>
</dbReference>
<dbReference type="GO" id="GO:1901317">
    <property type="term" value="P:regulation of flagellated sperm motility"/>
    <property type="evidence" value="ECO:0000250"/>
    <property type="project" value="UniProtKB"/>
</dbReference>
<dbReference type="GO" id="GO:0007288">
    <property type="term" value="P:sperm axoneme assembly"/>
    <property type="evidence" value="ECO:0000250"/>
    <property type="project" value="UniProtKB"/>
</dbReference>
<dbReference type="InterPro" id="IPR021897">
    <property type="entry name" value="FAP206"/>
</dbReference>
<dbReference type="PANTHER" id="PTHR21442">
    <property type="entry name" value="CILIA- AND FLAGELLA-ASSOCIATED PROTEIN 206"/>
    <property type="match status" value="1"/>
</dbReference>
<dbReference type="PANTHER" id="PTHR21442:SF0">
    <property type="entry name" value="CILIA- AND FLAGELLA-ASSOCIATED PROTEIN 206"/>
    <property type="match status" value="1"/>
</dbReference>
<dbReference type="Pfam" id="PF12018">
    <property type="entry name" value="FAP206"/>
    <property type="match status" value="1"/>
</dbReference>
<gene>
    <name evidence="2" type="primary">CFAP206</name>
</gene>
<accession>Q29RL1</accession>
<organism>
    <name type="scientific">Bos taurus</name>
    <name type="common">Bovine</name>
    <dbReference type="NCBI Taxonomy" id="9913"/>
    <lineage>
        <taxon>Eukaryota</taxon>
        <taxon>Metazoa</taxon>
        <taxon>Chordata</taxon>
        <taxon>Craniata</taxon>
        <taxon>Vertebrata</taxon>
        <taxon>Euteleostomi</taxon>
        <taxon>Mammalia</taxon>
        <taxon>Eutheria</taxon>
        <taxon>Laurasiatheria</taxon>
        <taxon>Artiodactyla</taxon>
        <taxon>Ruminantia</taxon>
        <taxon>Pecora</taxon>
        <taxon>Bovidae</taxon>
        <taxon>Bovinae</taxon>
        <taxon>Bos</taxon>
    </lineage>
</organism>
<keyword id="KW-0025">Alternative splicing</keyword>
<keyword id="KW-0966">Cell projection</keyword>
<keyword id="KW-0969">Cilium</keyword>
<keyword id="KW-0970">Cilium biogenesis/degradation</keyword>
<keyword id="KW-0963">Cytoplasm</keyword>
<keyword id="KW-0206">Cytoskeleton</keyword>
<keyword id="KW-1185">Reference proteome</keyword>
<comment type="function">
    <text evidence="1">Essential for sperm motility and is involved in the regulation of the beating frequency of motile cilia on the epithelial cells of the respiratory tract (By similarity). Required for the establishment of radial spokes in sperm flagella (By similarity).</text>
</comment>
<comment type="subcellular location">
    <subcellularLocation>
        <location evidence="1">Cytoplasm</location>
        <location evidence="1">Cytoskeleton</location>
        <location evidence="1">Cilium axoneme</location>
    </subcellularLocation>
    <subcellularLocation>
        <location evidence="1">Cytoplasm</location>
        <location evidence="1">Cytoskeleton</location>
        <location evidence="1">Cilium basal body</location>
    </subcellularLocation>
</comment>
<comment type="alternative products">
    <event type="alternative splicing"/>
    <isoform>
        <id>Q29RL1-1</id>
        <name>1</name>
        <sequence type="displayed"/>
    </isoform>
    <isoform>
        <id>Q29RL1-2</id>
        <name>2</name>
        <sequence type="described" ref="VSP_036123"/>
    </isoform>
</comment>
<comment type="similarity">
    <text evidence="4">Belongs to the CFAP206 family.</text>
</comment>
<protein>
    <recommendedName>
        <fullName evidence="4">Cilia- and flagella-associated protein 206</fullName>
    </recommendedName>
</protein>
<name>CF206_BOVIN</name>
<reference key="1">
    <citation type="journal article" date="2009" name="Science">
        <title>The genome sequence of taurine cattle: a window to ruminant biology and evolution.</title>
        <authorList>
            <consortium name="The bovine genome sequencing and analysis consortium"/>
        </authorList>
    </citation>
    <scope>NUCLEOTIDE SEQUENCE [LARGE SCALE GENOMIC DNA]</scope>
    <source>
        <strain>Hereford</strain>
    </source>
</reference>
<reference key="2">
    <citation type="submission" date="2006-02" db="EMBL/GenBank/DDBJ databases">
        <authorList>
            <consortium name="NIH - Mammalian Gene Collection (MGC) project"/>
        </authorList>
    </citation>
    <scope>NUCLEOTIDE SEQUENCE [LARGE SCALE MRNA] (ISOFORM 2)</scope>
    <source>
        <strain>Hereford</strain>
        <tissue>Hypothalamus</tissue>
    </source>
</reference>
<feature type="chain" id="PRO_0000358909" description="Cilia- and flagella-associated protein 206">
    <location>
        <begin position="1"/>
        <end position="622"/>
    </location>
</feature>
<feature type="splice variant" id="VSP_036123" description="In isoform 2." evidence="3">
    <location>
        <begin position="281"/>
        <end position="320"/>
    </location>
</feature>
<proteinExistence type="evidence at transcript level"/>
<sequence length="622" mass="71079">MPPTQAESVIKNIIREIGQECAAHGEIVPETLVAFMVKAVVLDPSNGFNTDRTLTKSDVQKLVKLCVNRLLDSKNPSLDTIKMQVYFDMNYTSREEFLEEHHQVIESRLSSVSREITDSRACVREELESLYRKIVSYVLLRSGLGSPTDIKIVREATAALQSVFPQTELGTFLTLSKKDKERQLKELTMIVTGIRLFNRDCGKGGEGIDDLPAILQEAIPATTQHVDSQLEVVQEQAYRYTAILEKVAKNPLMSQELQPYMLREALYNVRQCEIFLQVILSDIITCAQEVEMMIKQLEAQLEQLKLTVKSKTAVPTSQVFPIFIALSNLWTSFQDETVLISILSNLTTHLEPFLGAHDLFFPEKVMQVLLDGVTVKTDVCRIKEHIEDKVNVADFKKLEWLFPETTANFDKLLIQYRGFCAYTFATTDGLLLPGNPSIGILKYKDKYYTFNTRDAAYSFAENPENYIDIIREKAKRNAELIQLLELHQQFESLIQYSQMKEVDKRYIKPITKCETGTQTDTHLLPPTIVRSYEWNEWELRRKAIKLANLRRKVTHSVQTDHSHMRRENCSQVYPSKDVGTQSMREGSSRVPRPQIYIAGLRGGQTKTTYGVKVNLTRAVDET</sequence>
<evidence type="ECO:0000250" key="1">
    <source>
        <dbReference type="UniProtKB" id="Q6PE87"/>
    </source>
</evidence>
<evidence type="ECO:0000250" key="2">
    <source>
        <dbReference type="UniProtKB" id="Q8IYR0"/>
    </source>
</evidence>
<evidence type="ECO:0000303" key="3">
    <source ref="2"/>
</evidence>
<evidence type="ECO:0000305" key="4"/>